<organism>
    <name type="scientific">Staphylococcus aureus (strain N315)</name>
    <dbReference type="NCBI Taxonomy" id="158879"/>
    <lineage>
        <taxon>Bacteria</taxon>
        <taxon>Bacillati</taxon>
        <taxon>Bacillota</taxon>
        <taxon>Bacilli</taxon>
        <taxon>Bacillales</taxon>
        <taxon>Staphylococcaceae</taxon>
        <taxon>Staphylococcus</taxon>
    </lineage>
</organism>
<reference key="1">
    <citation type="journal article" date="1999" name="Antimicrob. Agents Chemother.">
        <title>Cloning and nucleotide sequence determination of the entire mec DNA of pre-methicillin-resistant Staphylococcus aureus N315.</title>
        <authorList>
            <person name="Ito T."/>
            <person name="Katayama Y."/>
            <person name="Hiramatsu K."/>
        </authorList>
    </citation>
    <scope>NUCLEOTIDE SEQUENCE [GENOMIC DNA]</scope>
</reference>
<reference key="2">
    <citation type="journal article" date="2001" name="Lancet">
        <title>Whole genome sequencing of meticillin-resistant Staphylococcus aureus.</title>
        <authorList>
            <person name="Kuroda M."/>
            <person name="Ohta T."/>
            <person name="Uchiyama I."/>
            <person name="Baba T."/>
            <person name="Yuzawa H."/>
            <person name="Kobayashi I."/>
            <person name="Cui L."/>
            <person name="Oguchi A."/>
            <person name="Aoki K."/>
            <person name="Nagai Y."/>
            <person name="Lian J.-Q."/>
            <person name="Ito T."/>
            <person name="Kanamori M."/>
            <person name="Matsumaru H."/>
            <person name="Maruyama A."/>
            <person name="Murakami H."/>
            <person name="Hosoyama A."/>
            <person name="Mizutani-Ui Y."/>
            <person name="Takahashi N.K."/>
            <person name="Sawano T."/>
            <person name="Inoue R."/>
            <person name="Kaito C."/>
            <person name="Sekimizu K."/>
            <person name="Hirakawa H."/>
            <person name="Kuhara S."/>
            <person name="Goto S."/>
            <person name="Yabuzaki J."/>
            <person name="Kanehisa M."/>
            <person name="Yamashita A."/>
            <person name="Oshima K."/>
            <person name="Furuya K."/>
            <person name="Yoshino C."/>
            <person name="Shiba T."/>
            <person name="Hattori M."/>
            <person name="Ogasawara N."/>
            <person name="Hayashi H."/>
            <person name="Hiramatsu K."/>
        </authorList>
    </citation>
    <scope>NUCLEOTIDE SEQUENCE [LARGE SCALE GENOMIC DNA]</scope>
    <source>
        <strain>N315</strain>
    </source>
</reference>
<protein>
    <recommendedName>
        <fullName>Transposase for insertion sequence-like element IS431mec</fullName>
    </recommendedName>
</protein>
<evidence type="ECO:0000250" key="1"/>
<evidence type="ECO:0000255" key="2"/>
<evidence type="ECO:0000255" key="3">
    <source>
        <dbReference type="PROSITE-ProRule" id="PRU00457"/>
    </source>
</evidence>
<sequence>MNYFRYKQFNKDVITVAVGYYLRYTLSYRDISEILRERGVNVHHSTVYRWVQEYAPILYQIWKKKHKKAYYKWRIDETYIKIKGKWSYLYRAIDAEGHTLDIWLRKQRDNHSAYAFIKRLIKQFGKPQKVITDQAPSTKVAMAKVIKAFKLKPDCHCTSKYLNNLIEQDHRHIKVRKTRYQSINTAKNTLKGIECIYALYKKNRRSLQIYGFSPCHEISIMLAS</sequence>
<dbReference type="EMBL" id="D86934">
    <property type="protein sequence ID" value="BAA82228.1"/>
    <property type="molecule type" value="Genomic_DNA"/>
</dbReference>
<dbReference type="EMBL" id="BA000018">
    <property type="protein sequence ID" value="BAB41243.1"/>
    <property type="molecule type" value="Genomic_DNA"/>
</dbReference>
<dbReference type="EMBL" id="BA000018">
    <property type="protein sequence ID" value="BAB41252.1"/>
    <property type="molecule type" value="Genomic_DNA"/>
</dbReference>
<dbReference type="PIR" id="S12093">
    <property type="entry name" value="S12093"/>
</dbReference>
<dbReference type="RefSeq" id="WP_001106057.1">
    <property type="nucleotide sequence ID" value="NC_002745.2"/>
</dbReference>
<dbReference type="SMR" id="P0A044"/>
<dbReference type="EnsemblBacteria" id="BAB41243">
    <property type="protein sequence ID" value="BAB41243"/>
    <property type="gene ID" value="BAB41243"/>
</dbReference>
<dbReference type="EnsemblBacteria" id="BAB41252">
    <property type="protein sequence ID" value="BAB41252"/>
    <property type="gene ID" value="BAB41252"/>
</dbReference>
<dbReference type="KEGG" id="sau:SA0026"/>
<dbReference type="KEGG" id="sau:SA0034"/>
<dbReference type="HOGENOM" id="CLU_067322_1_0_9"/>
<dbReference type="GO" id="GO:0003677">
    <property type="term" value="F:DNA binding"/>
    <property type="evidence" value="ECO:0007669"/>
    <property type="project" value="UniProtKB-KW"/>
</dbReference>
<dbReference type="GO" id="GO:0015074">
    <property type="term" value="P:DNA integration"/>
    <property type="evidence" value="ECO:0007669"/>
    <property type="project" value="InterPro"/>
</dbReference>
<dbReference type="GO" id="GO:0006310">
    <property type="term" value="P:DNA recombination"/>
    <property type="evidence" value="ECO:0007669"/>
    <property type="project" value="UniProtKB-KW"/>
</dbReference>
<dbReference type="GO" id="GO:0032196">
    <property type="term" value="P:transposition"/>
    <property type="evidence" value="ECO:0007669"/>
    <property type="project" value="UniProtKB-KW"/>
</dbReference>
<dbReference type="Gene3D" id="3.30.420.10">
    <property type="entry name" value="Ribonuclease H-like superfamily/Ribonuclease H"/>
    <property type="match status" value="1"/>
</dbReference>
<dbReference type="InterPro" id="IPR032874">
    <property type="entry name" value="DDE_dom"/>
</dbReference>
<dbReference type="InterPro" id="IPR001584">
    <property type="entry name" value="Integrase_cat-core"/>
</dbReference>
<dbReference type="InterPro" id="IPR052183">
    <property type="entry name" value="IS_Transposase"/>
</dbReference>
<dbReference type="InterPro" id="IPR012337">
    <property type="entry name" value="RNaseH-like_sf"/>
</dbReference>
<dbReference type="InterPro" id="IPR036397">
    <property type="entry name" value="RNaseH_sf"/>
</dbReference>
<dbReference type="InterPro" id="IPR047930">
    <property type="entry name" value="Transpos_IS6"/>
</dbReference>
<dbReference type="NCBIfam" id="NF033587">
    <property type="entry name" value="transpos_IS6"/>
    <property type="match status" value="1"/>
</dbReference>
<dbReference type="PANTHER" id="PTHR35528">
    <property type="entry name" value="BLL1675 PROTEIN"/>
    <property type="match status" value="1"/>
</dbReference>
<dbReference type="PANTHER" id="PTHR35528:SF3">
    <property type="entry name" value="BLL1675 PROTEIN"/>
    <property type="match status" value="1"/>
</dbReference>
<dbReference type="Pfam" id="PF13610">
    <property type="entry name" value="DDE_Tnp_IS240"/>
    <property type="match status" value="1"/>
</dbReference>
<dbReference type="SUPFAM" id="SSF53098">
    <property type="entry name" value="Ribonuclease H-like"/>
    <property type="match status" value="1"/>
</dbReference>
<dbReference type="PROSITE" id="PS50994">
    <property type="entry name" value="INTEGRASE"/>
    <property type="match status" value="1"/>
</dbReference>
<accession>P0A044</accession>
<accession>P0A046</accession>
<accession>P19380</accession>
<proteinExistence type="inferred from homology"/>
<gene>
    <name type="primary">tnp1</name>
    <name type="ordered locus">SA0026</name>
</gene>
<gene>
    <name type="primary">tnp2</name>
    <name type="ordered locus">SA0034</name>
</gene>
<feature type="chain" id="PRO_0000075437" description="Transposase for insertion sequence-like element IS431mec">
    <location>
        <begin position="1"/>
        <end position="224"/>
    </location>
</feature>
<feature type="domain" description="Integrase catalytic" evidence="3">
    <location>
        <begin position="73"/>
        <end position="222"/>
    </location>
</feature>
<feature type="DNA-binding region" description="H-T-H motif" evidence="2">
    <location>
        <begin position="33"/>
        <end position="52"/>
    </location>
</feature>
<name>T431_STAAN</name>
<keyword id="KW-0233">DNA recombination</keyword>
<keyword id="KW-0238">DNA-binding</keyword>
<keyword id="KW-0814">Transposable element</keyword>
<keyword id="KW-0815">Transposition</keyword>
<comment type="function">
    <text evidence="1">Involved in the transposition of the insertion sequence.</text>
</comment>